<reference key="1">
    <citation type="submission" date="2008-10" db="EMBL/GenBank/DDBJ databases">
        <title>Genome sequence of Bacillus anthracis str. CDC 684.</title>
        <authorList>
            <person name="Dodson R.J."/>
            <person name="Munk A.C."/>
            <person name="Brettin T."/>
            <person name="Bruce D."/>
            <person name="Detter C."/>
            <person name="Tapia R."/>
            <person name="Han C."/>
            <person name="Sutton G."/>
            <person name="Sims D."/>
        </authorList>
    </citation>
    <scope>NUCLEOTIDE SEQUENCE [LARGE SCALE GENOMIC DNA]</scope>
    <source>
        <strain>CDC 684 / NRRL 3495</strain>
    </source>
</reference>
<proteinExistence type="inferred from homology"/>
<protein>
    <recommendedName>
        <fullName evidence="1">HTH-type transcriptional regulator Hpr</fullName>
    </recommendedName>
    <alternativeName>
        <fullName evidence="1">Protease production regulatory protein Hpr</fullName>
    </alternativeName>
</protein>
<sequence length="185" mass="21733">MKSGEKDYSVKEAMIFSQRIAQLSKALWKCVEKDWQMWIKPYDLNINEHHILTIAYHLKGASISEIAKFGVMHVSTAFNFSKKLEERGYLVFSKKEDDKRNTYIEITDKGEELLLRLMEEYDPENNSVFNGALALRNFYGKFPENIELIAILRNIYGQDFIDIFEKSLEDIEENFTESDQKLVKK</sequence>
<comment type="function">
    <text evidence="1">Negative regulator of protease production and sporulation.</text>
</comment>
<comment type="subunit">
    <text evidence="1">Homodimer.</text>
</comment>
<dbReference type="EMBL" id="CP001215">
    <property type="protein sequence ID" value="ACP15798.1"/>
    <property type="molecule type" value="Genomic_DNA"/>
</dbReference>
<dbReference type="RefSeq" id="WP_000834918.1">
    <property type="nucleotide sequence ID" value="NC_012581.1"/>
</dbReference>
<dbReference type="SMR" id="C3LCW8"/>
<dbReference type="KEGG" id="bah:BAMEG_3528"/>
<dbReference type="HOGENOM" id="CLU_115790_0_0_9"/>
<dbReference type="GO" id="GO:0003677">
    <property type="term" value="F:DNA binding"/>
    <property type="evidence" value="ECO:0007669"/>
    <property type="project" value="UniProtKB-UniRule"/>
</dbReference>
<dbReference type="GO" id="GO:0003700">
    <property type="term" value="F:DNA-binding transcription factor activity"/>
    <property type="evidence" value="ECO:0007669"/>
    <property type="project" value="UniProtKB-UniRule"/>
</dbReference>
<dbReference type="GO" id="GO:0045892">
    <property type="term" value="P:negative regulation of DNA-templated transcription"/>
    <property type="evidence" value="ECO:0007669"/>
    <property type="project" value="UniProtKB-UniRule"/>
</dbReference>
<dbReference type="GO" id="GO:0006950">
    <property type="term" value="P:response to stress"/>
    <property type="evidence" value="ECO:0007669"/>
    <property type="project" value="TreeGrafter"/>
</dbReference>
<dbReference type="GO" id="GO:0030435">
    <property type="term" value="P:sporulation resulting in formation of a cellular spore"/>
    <property type="evidence" value="ECO:0007669"/>
    <property type="project" value="UniProtKB-UniRule"/>
</dbReference>
<dbReference type="FunFam" id="1.10.10.10:FF:000194">
    <property type="entry name" value="HTH-type transcriptional regulator Hpr"/>
    <property type="match status" value="1"/>
</dbReference>
<dbReference type="Gene3D" id="1.10.10.10">
    <property type="entry name" value="Winged helix-like DNA-binding domain superfamily/Winged helix DNA-binding domain"/>
    <property type="match status" value="1"/>
</dbReference>
<dbReference type="HAMAP" id="MF_01911">
    <property type="entry name" value="HTH_type_Hpr"/>
    <property type="match status" value="1"/>
</dbReference>
<dbReference type="InterPro" id="IPR000835">
    <property type="entry name" value="HTH_MarR-typ"/>
</dbReference>
<dbReference type="InterPro" id="IPR023488">
    <property type="entry name" value="HTH_tscrpt_reg_Hpr"/>
</dbReference>
<dbReference type="InterPro" id="IPR039422">
    <property type="entry name" value="MarR/SlyA-like"/>
</dbReference>
<dbReference type="InterPro" id="IPR023187">
    <property type="entry name" value="Tscrpt_reg_MarR-type_CS"/>
</dbReference>
<dbReference type="InterPro" id="IPR036388">
    <property type="entry name" value="WH-like_DNA-bd_sf"/>
</dbReference>
<dbReference type="InterPro" id="IPR036390">
    <property type="entry name" value="WH_DNA-bd_sf"/>
</dbReference>
<dbReference type="NCBIfam" id="NF010349">
    <property type="entry name" value="PRK13777.1"/>
    <property type="match status" value="1"/>
</dbReference>
<dbReference type="PANTHER" id="PTHR33164:SF58">
    <property type="entry name" value="DNA-BINDING TRANSCRIPTIONAL REPRESSOR SCOC"/>
    <property type="match status" value="1"/>
</dbReference>
<dbReference type="PANTHER" id="PTHR33164">
    <property type="entry name" value="TRANSCRIPTIONAL REGULATOR, MARR FAMILY"/>
    <property type="match status" value="1"/>
</dbReference>
<dbReference type="Pfam" id="PF01047">
    <property type="entry name" value="MarR"/>
    <property type="match status" value="1"/>
</dbReference>
<dbReference type="SMART" id="SM00347">
    <property type="entry name" value="HTH_MARR"/>
    <property type="match status" value="1"/>
</dbReference>
<dbReference type="SUPFAM" id="SSF46785">
    <property type="entry name" value="Winged helix' DNA-binding domain"/>
    <property type="match status" value="1"/>
</dbReference>
<dbReference type="PROSITE" id="PS01117">
    <property type="entry name" value="HTH_MARR_1"/>
    <property type="match status" value="1"/>
</dbReference>
<dbReference type="PROSITE" id="PS50995">
    <property type="entry name" value="HTH_MARR_2"/>
    <property type="match status" value="1"/>
</dbReference>
<gene>
    <name evidence="1" type="primary">hpr</name>
    <name type="ordered locus">BAMEG_3528</name>
</gene>
<accession>C3LCW8</accession>
<name>HPR_BACAC</name>
<organism>
    <name type="scientific">Bacillus anthracis (strain CDC 684 / NRRL 3495)</name>
    <dbReference type="NCBI Taxonomy" id="568206"/>
    <lineage>
        <taxon>Bacteria</taxon>
        <taxon>Bacillati</taxon>
        <taxon>Bacillota</taxon>
        <taxon>Bacilli</taxon>
        <taxon>Bacillales</taxon>
        <taxon>Bacillaceae</taxon>
        <taxon>Bacillus</taxon>
        <taxon>Bacillus cereus group</taxon>
    </lineage>
</organism>
<keyword id="KW-0238">DNA-binding</keyword>
<keyword id="KW-0678">Repressor</keyword>
<keyword id="KW-0749">Sporulation</keyword>
<keyword id="KW-0804">Transcription</keyword>
<keyword id="KW-0805">Transcription regulation</keyword>
<evidence type="ECO:0000255" key="1">
    <source>
        <dbReference type="HAMAP-Rule" id="MF_01911"/>
    </source>
</evidence>
<feature type="chain" id="PRO_1000188790" description="HTH-type transcriptional regulator Hpr">
    <location>
        <begin position="1"/>
        <end position="185"/>
    </location>
</feature>
<feature type="domain" description="HTH marR-type" evidence="1">
    <location>
        <begin position="13"/>
        <end position="157"/>
    </location>
</feature>
<feature type="DNA-binding region" description="H-T-H motif" evidence="1">
    <location>
        <begin position="63"/>
        <end position="86"/>
    </location>
</feature>